<protein>
    <recommendedName>
        <fullName>Tremerogen A-10</fullName>
    </recommendedName>
</protein>
<proteinExistence type="evidence at protein level"/>
<accession>P01371</accession>
<sequence>EHDPSAPGNGYC</sequence>
<comment type="function">
    <text>Tremerogen A-10 is produced by the a mating-type cells and induces formation of conjugation tubes in a mating-type cells.</text>
</comment>
<comment type="subcellular location">
    <subcellularLocation>
        <location evidence="2">Cell membrane</location>
        <topology evidence="2">Lipid-anchor</topology>
        <orientation evidence="2">Cytoplasmic side</orientation>
    </subcellularLocation>
</comment>
<evidence type="ECO:0000269" key="1">
    <source>
    </source>
</evidence>
<evidence type="ECO:0000305" key="2"/>
<organism>
    <name type="scientific">Tremella mesenterica</name>
    <name type="common">Jelly fungus</name>
    <dbReference type="NCBI Taxonomy" id="5217"/>
    <lineage>
        <taxon>Eukaryota</taxon>
        <taxon>Fungi</taxon>
        <taxon>Dikarya</taxon>
        <taxon>Basidiomycota</taxon>
        <taxon>Agaricomycotina</taxon>
        <taxon>Tremellomycetes</taxon>
        <taxon>Tremellales</taxon>
        <taxon>Tremellaceae</taxon>
        <taxon>Tremella</taxon>
    </lineage>
</organism>
<feature type="peptide" id="PRO_0000044222" description="Tremerogen A-10">
    <location>
        <begin position="1"/>
        <end position="12"/>
    </location>
</feature>
<feature type="modified residue" description="Cysteine methyl ester" evidence="1">
    <location>
        <position position="12"/>
    </location>
</feature>
<feature type="lipid moiety-binding region" description="S-12-hydroxyfarnesyl cysteine" evidence="1">
    <location>
        <position position="12"/>
    </location>
</feature>
<keyword id="KW-1003">Cell membrane</keyword>
<keyword id="KW-0903">Direct protein sequencing</keyword>
<keyword id="KW-0449">Lipoprotein</keyword>
<keyword id="KW-0472">Membrane</keyword>
<keyword id="KW-0488">Methylation</keyword>
<keyword id="KW-0588">Pheromone</keyword>
<keyword id="KW-0636">Prenylation</keyword>
<reference key="1">
    <citation type="journal article" date="1981" name="Science">
        <title>Peptide sex hormones inducing conjugation tube formation in compatible mating-type cells of Tremella mesenterica.</title>
        <authorList>
            <person name="Sakagami Y."/>
            <person name="Yoshida M."/>
            <person name="Isogai A."/>
            <person name="Suzuki A."/>
        </authorList>
    </citation>
    <scope>PROTEIN SEQUENCE</scope>
    <scope>METHYLATION AT CYS-12</scope>
    <scope>ISOPRENYLATION AT CYS-12</scope>
</reference>
<dbReference type="PIR" id="A01642">
    <property type="entry name" value="JTJG0"/>
</dbReference>
<dbReference type="GO" id="GO:0005886">
    <property type="term" value="C:plasma membrane"/>
    <property type="evidence" value="ECO:0007669"/>
    <property type="project" value="UniProtKB-SubCell"/>
</dbReference>
<dbReference type="GO" id="GO:0005186">
    <property type="term" value="F:pheromone activity"/>
    <property type="evidence" value="ECO:0007669"/>
    <property type="project" value="UniProtKB-KW"/>
</dbReference>
<name>TA10_TREME</name>